<evidence type="ECO:0000255" key="1">
    <source>
        <dbReference type="HAMAP-Rule" id="MF_01396"/>
    </source>
</evidence>
<keyword id="KW-0066">ATP synthesis</keyword>
<keyword id="KW-0997">Cell inner membrane</keyword>
<keyword id="KW-1003">Cell membrane</keyword>
<keyword id="KW-0138">CF(0)</keyword>
<keyword id="KW-0375">Hydrogen ion transport</keyword>
<keyword id="KW-0406">Ion transport</keyword>
<keyword id="KW-0446">Lipid-binding</keyword>
<keyword id="KW-0472">Membrane</keyword>
<keyword id="KW-1185">Reference proteome</keyword>
<keyword id="KW-0812">Transmembrane</keyword>
<keyword id="KW-1133">Transmembrane helix</keyword>
<keyword id="KW-0813">Transport</keyword>
<sequence length="74" mass="7147">MEGELAHIGAGLAAIGSGAAAIGVGNVAGNYLAGALRNPSAAASQTATLFIGIAFAEALGIFAFLVALLLMFAV</sequence>
<reference key="1">
    <citation type="journal article" date="2007" name="J. Bacteriol.">
        <title>The complete genome sequence of Roseobacter denitrificans reveals a mixotrophic rather than photosynthetic metabolism.</title>
        <authorList>
            <person name="Swingley W.D."/>
            <person name="Sadekar S."/>
            <person name="Mastrian S.D."/>
            <person name="Matthies H.J."/>
            <person name="Hao J."/>
            <person name="Ramos H."/>
            <person name="Acharya C.R."/>
            <person name="Conrad A.L."/>
            <person name="Taylor H.L."/>
            <person name="Dejesa L.C."/>
            <person name="Shah M.K."/>
            <person name="O'Huallachain M.E."/>
            <person name="Lince M.T."/>
            <person name="Blankenship R.E."/>
            <person name="Beatty J.T."/>
            <person name="Touchman J.W."/>
        </authorList>
    </citation>
    <scope>NUCLEOTIDE SEQUENCE [LARGE SCALE GENOMIC DNA]</scope>
    <source>
        <strain>ATCC 33942 / OCh 114</strain>
    </source>
</reference>
<name>ATPL_ROSDO</name>
<organism>
    <name type="scientific">Roseobacter denitrificans (strain ATCC 33942 / OCh 114)</name>
    <name type="common">Erythrobacter sp. (strain OCh 114)</name>
    <name type="synonym">Roseobacter denitrificans</name>
    <dbReference type="NCBI Taxonomy" id="375451"/>
    <lineage>
        <taxon>Bacteria</taxon>
        <taxon>Pseudomonadati</taxon>
        <taxon>Pseudomonadota</taxon>
        <taxon>Alphaproteobacteria</taxon>
        <taxon>Rhodobacterales</taxon>
        <taxon>Roseobacteraceae</taxon>
        <taxon>Roseobacter</taxon>
    </lineage>
</organism>
<gene>
    <name evidence="1" type="primary">atpE</name>
    <name type="ordered locus">RD1_1323</name>
</gene>
<feature type="chain" id="PRO_1000184452" description="ATP synthase subunit c">
    <location>
        <begin position="1"/>
        <end position="74"/>
    </location>
</feature>
<feature type="transmembrane region" description="Helical" evidence="1">
    <location>
        <begin position="5"/>
        <end position="25"/>
    </location>
</feature>
<feature type="transmembrane region" description="Helical" evidence="1">
    <location>
        <begin position="49"/>
        <end position="69"/>
    </location>
</feature>
<feature type="site" description="Reversibly protonated during proton transport" evidence="1">
    <location>
        <position position="57"/>
    </location>
</feature>
<protein>
    <recommendedName>
        <fullName evidence="1">ATP synthase subunit c</fullName>
    </recommendedName>
    <alternativeName>
        <fullName evidence="1">ATP synthase F(0) sector subunit c</fullName>
    </alternativeName>
    <alternativeName>
        <fullName evidence="1">F-type ATPase subunit c</fullName>
        <shortName evidence="1">F-ATPase subunit c</shortName>
    </alternativeName>
    <alternativeName>
        <fullName evidence="1">Lipid-binding protein</fullName>
    </alternativeName>
</protein>
<comment type="function">
    <text evidence="1">F(1)F(0) ATP synthase produces ATP from ADP in the presence of a proton or sodium gradient. F-type ATPases consist of two structural domains, F(1) containing the extramembraneous catalytic core and F(0) containing the membrane proton channel, linked together by a central stalk and a peripheral stalk. During catalysis, ATP synthesis in the catalytic domain of F(1) is coupled via a rotary mechanism of the central stalk subunits to proton translocation.</text>
</comment>
<comment type="function">
    <text evidence="1">Key component of the F(0) channel; it plays a direct role in translocation across the membrane. A homomeric c-ring of between 10-14 subunits forms the central stalk rotor element with the F(1) delta and epsilon subunits.</text>
</comment>
<comment type="subunit">
    <text evidence="1">F-type ATPases have 2 components, F(1) - the catalytic core - and F(0) - the membrane proton channel. F(1) has five subunits: alpha(3), beta(3), gamma(1), delta(1), epsilon(1). F(0) has four main subunits: a(1), b(1), b'(1) and c(10-14). The alpha and beta chains form an alternating ring which encloses part of the gamma chain. F(1) is attached to F(0) by a central stalk formed by the gamma and epsilon chains, while a peripheral stalk is formed by the delta, b and b' chains.</text>
</comment>
<comment type="subcellular location">
    <subcellularLocation>
        <location evidence="1">Cell inner membrane</location>
        <topology evidence="1">Multi-pass membrane protein</topology>
    </subcellularLocation>
</comment>
<comment type="similarity">
    <text evidence="1">Belongs to the ATPase C chain family.</text>
</comment>
<proteinExistence type="inferred from homology"/>
<dbReference type="EMBL" id="CP000362">
    <property type="protein sequence ID" value="ABG30966.1"/>
    <property type="molecule type" value="Genomic_DNA"/>
</dbReference>
<dbReference type="RefSeq" id="WP_011567586.1">
    <property type="nucleotide sequence ID" value="NZ_FOOO01000008.1"/>
</dbReference>
<dbReference type="SMR" id="Q16AM7"/>
<dbReference type="STRING" id="375451.RD1_1323"/>
<dbReference type="KEGG" id="rde:RD1_1323"/>
<dbReference type="eggNOG" id="COG0636">
    <property type="taxonomic scope" value="Bacteria"/>
</dbReference>
<dbReference type="HOGENOM" id="CLU_148047_4_0_5"/>
<dbReference type="OrthoDB" id="9811093at2"/>
<dbReference type="Proteomes" id="UP000007029">
    <property type="component" value="Chromosome"/>
</dbReference>
<dbReference type="GO" id="GO:0005886">
    <property type="term" value="C:plasma membrane"/>
    <property type="evidence" value="ECO:0007669"/>
    <property type="project" value="UniProtKB-SubCell"/>
</dbReference>
<dbReference type="GO" id="GO:0045259">
    <property type="term" value="C:proton-transporting ATP synthase complex"/>
    <property type="evidence" value="ECO:0007669"/>
    <property type="project" value="UniProtKB-KW"/>
</dbReference>
<dbReference type="GO" id="GO:0033177">
    <property type="term" value="C:proton-transporting two-sector ATPase complex, proton-transporting domain"/>
    <property type="evidence" value="ECO:0007669"/>
    <property type="project" value="InterPro"/>
</dbReference>
<dbReference type="GO" id="GO:0008289">
    <property type="term" value="F:lipid binding"/>
    <property type="evidence" value="ECO:0007669"/>
    <property type="project" value="UniProtKB-KW"/>
</dbReference>
<dbReference type="GO" id="GO:0046933">
    <property type="term" value="F:proton-transporting ATP synthase activity, rotational mechanism"/>
    <property type="evidence" value="ECO:0007669"/>
    <property type="project" value="UniProtKB-UniRule"/>
</dbReference>
<dbReference type="Gene3D" id="1.20.20.10">
    <property type="entry name" value="F1F0 ATP synthase subunit C"/>
    <property type="match status" value="1"/>
</dbReference>
<dbReference type="HAMAP" id="MF_01396">
    <property type="entry name" value="ATP_synth_c_bact"/>
    <property type="match status" value="1"/>
</dbReference>
<dbReference type="InterPro" id="IPR000454">
    <property type="entry name" value="ATP_synth_F0_csu"/>
</dbReference>
<dbReference type="InterPro" id="IPR038662">
    <property type="entry name" value="ATP_synth_F0_csu_sf"/>
</dbReference>
<dbReference type="InterPro" id="IPR002379">
    <property type="entry name" value="ATPase_proteolipid_c-like_dom"/>
</dbReference>
<dbReference type="InterPro" id="IPR035921">
    <property type="entry name" value="F/V-ATP_Csub_sf"/>
</dbReference>
<dbReference type="NCBIfam" id="NF005733">
    <property type="entry name" value="PRK07558.1"/>
    <property type="match status" value="1"/>
</dbReference>
<dbReference type="PANTHER" id="PTHR10031">
    <property type="entry name" value="ATP SYNTHASE LIPID-BINDING PROTEIN, MITOCHONDRIAL"/>
    <property type="match status" value="1"/>
</dbReference>
<dbReference type="PANTHER" id="PTHR10031:SF0">
    <property type="entry name" value="ATPASE PROTEIN 9"/>
    <property type="match status" value="1"/>
</dbReference>
<dbReference type="Pfam" id="PF00137">
    <property type="entry name" value="ATP-synt_C"/>
    <property type="match status" value="1"/>
</dbReference>
<dbReference type="PRINTS" id="PR00124">
    <property type="entry name" value="ATPASEC"/>
</dbReference>
<dbReference type="SUPFAM" id="SSF81333">
    <property type="entry name" value="F1F0 ATP synthase subunit C"/>
    <property type="match status" value="1"/>
</dbReference>
<accession>Q16AM7</accession>